<comment type="function">
    <text evidence="1">Activates KDO (a required 8-carbon sugar) for incorporation into bacterial lipopolysaccharide in Gram-negative bacteria.</text>
</comment>
<comment type="catalytic activity">
    <reaction evidence="1">
        <text>3-deoxy-alpha-D-manno-oct-2-ulosonate + CTP = CMP-3-deoxy-beta-D-manno-octulosonate + diphosphate</text>
        <dbReference type="Rhea" id="RHEA:23448"/>
        <dbReference type="ChEBI" id="CHEBI:33019"/>
        <dbReference type="ChEBI" id="CHEBI:37563"/>
        <dbReference type="ChEBI" id="CHEBI:85986"/>
        <dbReference type="ChEBI" id="CHEBI:85987"/>
        <dbReference type="EC" id="2.7.7.38"/>
    </reaction>
</comment>
<comment type="pathway">
    <text evidence="1">Nucleotide-sugar biosynthesis; CMP-3-deoxy-D-manno-octulosonate biosynthesis; CMP-3-deoxy-D-manno-octulosonate from 3-deoxy-D-manno-octulosonate and CTP: step 1/1.</text>
</comment>
<comment type="pathway">
    <text evidence="1">Bacterial outer membrane biogenesis; lipopolysaccharide biosynthesis.</text>
</comment>
<comment type="subcellular location">
    <subcellularLocation>
        <location evidence="1">Cytoplasm</location>
    </subcellularLocation>
</comment>
<comment type="similarity">
    <text evidence="1">Belongs to the KdsB family.</text>
</comment>
<feature type="chain" id="PRO_0000370079" description="3-deoxy-manno-octulosonate cytidylyltransferase">
    <location>
        <begin position="1"/>
        <end position="250"/>
    </location>
</feature>
<reference key="1">
    <citation type="submission" date="2006-11" db="EMBL/GenBank/DDBJ databases">
        <title>Identification and characterization of a new conjugation/ type IVA secretion system (trb/tra) of L. pneumophila Corby localized on a mobile genomic island.</title>
        <authorList>
            <person name="Gloeckner G."/>
            <person name="Albert-Weissenberger C."/>
            <person name="Weinmann E."/>
            <person name="Jacobi S."/>
            <person name="Schunder E."/>
            <person name="Steinert M."/>
            <person name="Buchrieser C."/>
            <person name="Hacker J."/>
            <person name="Heuner K."/>
        </authorList>
    </citation>
    <scope>NUCLEOTIDE SEQUENCE [LARGE SCALE GENOMIC DNA]</scope>
    <source>
        <strain>Corby</strain>
    </source>
</reference>
<dbReference type="EC" id="2.7.7.38" evidence="1"/>
<dbReference type="EMBL" id="CP000675">
    <property type="protein sequence ID" value="ABQ55327.1"/>
    <property type="molecule type" value="Genomic_DNA"/>
</dbReference>
<dbReference type="RefSeq" id="WP_011946816.1">
    <property type="nucleotide sequence ID" value="NC_009494.2"/>
</dbReference>
<dbReference type="SMR" id="A5ID77"/>
<dbReference type="KEGG" id="lpc:LPC_1373"/>
<dbReference type="HOGENOM" id="CLU_065038_1_0_6"/>
<dbReference type="UniPathway" id="UPA00030"/>
<dbReference type="UniPathway" id="UPA00358">
    <property type="reaction ID" value="UER00476"/>
</dbReference>
<dbReference type="GO" id="GO:0005829">
    <property type="term" value="C:cytosol"/>
    <property type="evidence" value="ECO:0007669"/>
    <property type="project" value="TreeGrafter"/>
</dbReference>
<dbReference type="GO" id="GO:0008690">
    <property type="term" value="F:3-deoxy-manno-octulosonate cytidylyltransferase activity"/>
    <property type="evidence" value="ECO:0007669"/>
    <property type="project" value="UniProtKB-UniRule"/>
</dbReference>
<dbReference type="GO" id="GO:0033468">
    <property type="term" value="P:CMP-keto-3-deoxy-D-manno-octulosonic acid biosynthetic process"/>
    <property type="evidence" value="ECO:0007669"/>
    <property type="project" value="UniProtKB-UniRule"/>
</dbReference>
<dbReference type="GO" id="GO:0009103">
    <property type="term" value="P:lipopolysaccharide biosynthetic process"/>
    <property type="evidence" value="ECO:0007669"/>
    <property type="project" value="UniProtKB-UniRule"/>
</dbReference>
<dbReference type="CDD" id="cd02517">
    <property type="entry name" value="CMP-KDO-Synthetase"/>
    <property type="match status" value="1"/>
</dbReference>
<dbReference type="FunFam" id="3.90.550.10:FF:000011">
    <property type="entry name" value="3-deoxy-manno-octulosonate cytidylyltransferase"/>
    <property type="match status" value="1"/>
</dbReference>
<dbReference type="Gene3D" id="3.90.550.10">
    <property type="entry name" value="Spore Coat Polysaccharide Biosynthesis Protein SpsA, Chain A"/>
    <property type="match status" value="1"/>
</dbReference>
<dbReference type="HAMAP" id="MF_00057">
    <property type="entry name" value="KdsB"/>
    <property type="match status" value="1"/>
</dbReference>
<dbReference type="InterPro" id="IPR003329">
    <property type="entry name" value="Cytidylyl_trans"/>
</dbReference>
<dbReference type="InterPro" id="IPR004528">
    <property type="entry name" value="KdsB"/>
</dbReference>
<dbReference type="InterPro" id="IPR029044">
    <property type="entry name" value="Nucleotide-diphossugar_trans"/>
</dbReference>
<dbReference type="NCBIfam" id="TIGR00466">
    <property type="entry name" value="kdsB"/>
    <property type="match status" value="1"/>
</dbReference>
<dbReference type="NCBIfam" id="NF003950">
    <property type="entry name" value="PRK05450.1-3"/>
    <property type="match status" value="1"/>
</dbReference>
<dbReference type="NCBIfam" id="NF003952">
    <property type="entry name" value="PRK05450.1-5"/>
    <property type="match status" value="1"/>
</dbReference>
<dbReference type="NCBIfam" id="NF009905">
    <property type="entry name" value="PRK13368.1"/>
    <property type="match status" value="1"/>
</dbReference>
<dbReference type="PANTHER" id="PTHR42866">
    <property type="entry name" value="3-DEOXY-MANNO-OCTULOSONATE CYTIDYLYLTRANSFERASE"/>
    <property type="match status" value="1"/>
</dbReference>
<dbReference type="PANTHER" id="PTHR42866:SF2">
    <property type="entry name" value="3-DEOXY-MANNO-OCTULOSONATE CYTIDYLYLTRANSFERASE, MITOCHONDRIAL"/>
    <property type="match status" value="1"/>
</dbReference>
<dbReference type="Pfam" id="PF02348">
    <property type="entry name" value="CTP_transf_3"/>
    <property type="match status" value="1"/>
</dbReference>
<dbReference type="SUPFAM" id="SSF53448">
    <property type="entry name" value="Nucleotide-diphospho-sugar transferases"/>
    <property type="match status" value="1"/>
</dbReference>
<evidence type="ECO:0000255" key="1">
    <source>
        <dbReference type="HAMAP-Rule" id="MF_00057"/>
    </source>
</evidence>
<protein>
    <recommendedName>
        <fullName evidence="1">3-deoxy-manno-octulosonate cytidylyltransferase</fullName>
        <ecNumber evidence="1">2.7.7.38</ecNumber>
    </recommendedName>
    <alternativeName>
        <fullName evidence="1">CMP-2-keto-3-deoxyoctulosonic acid synthase</fullName>
        <shortName evidence="1">CKS</shortName>
        <shortName evidence="1">CMP-KDO synthase</shortName>
    </alternativeName>
</protein>
<keyword id="KW-0963">Cytoplasm</keyword>
<keyword id="KW-0448">Lipopolysaccharide biosynthesis</keyword>
<keyword id="KW-0548">Nucleotidyltransferase</keyword>
<keyword id="KW-0808">Transferase</keyword>
<gene>
    <name evidence="1" type="primary">kdsB</name>
    <name type="ordered locus">LPC_1373</name>
</gene>
<accession>A5ID77</accession>
<proteinExistence type="inferred from homology"/>
<name>KDSB_LEGPC</name>
<organism>
    <name type="scientific">Legionella pneumophila (strain Corby)</name>
    <dbReference type="NCBI Taxonomy" id="400673"/>
    <lineage>
        <taxon>Bacteria</taxon>
        <taxon>Pseudomonadati</taxon>
        <taxon>Pseudomonadota</taxon>
        <taxon>Gammaproteobacteria</taxon>
        <taxon>Legionellales</taxon>
        <taxon>Legionellaceae</taxon>
        <taxon>Legionella</taxon>
    </lineage>
</organism>
<sequence length="250" mass="28291">MSHNFHVIIPARYHSSRFPGKLLQEINGITVIERVYRQALLAEPKSVIIATDHDEIADRAIQFGAEVVITSHTHQTGTDRIAEVVAKGSFAPDDVIVNVQGDEPFIRPKLIQQVACSLTKTKAPVSTLCWPISSLEILNNPNVVKVVCTRDNHALYFSRSAIPYHRDNKSAYSNTFRHIGLYAYRAAFLLEFVSWPPCTLEQIECLEQLRILWSGFSIRVDEACEEPLQDINTKEDLILAQQYFLDISNI</sequence>